<proteinExistence type="inferred from homology"/>
<gene>
    <name evidence="2" type="primary">trmB</name>
    <name type="ordered locus">gbs0412</name>
</gene>
<sequence length="211" mass="24477">MRVRKRKGAEEHLENNPHYVISNPEEAKGRWHEIFGNNNPIHIEVGSGKGAFITGMAEQNPDINYIGIDIQLSVLSYALDKVLDSGAKNIKLLLVDGSSLSNYFDTGEVDLMYLNFSDPWPKKKHEKRRLTYKTFLDTYKDILPEQGEIHFKTDNRGLFEYSLASFSQYGMTLKQVWLDLHASDYQQNIMTEYERKFSNKGQVIYRVEARF</sequence>
<feature type="chain" id="PRO_0000171398" description="tRNA (guanine-N(7)-)-methyltransferase">
    <location>
        <begin position="1"/>
        <end position="211"/>
    </location>
</feature>
<feature type="region of interest" description="Interaction with RNA" evidence="2">
    <location>
        <begin position="124"/>
        <end position="129"/>
    </location>
</feature>
<feature type="active site" evidence="1">
    <location>
        <position position="118"/>
    </location>
</feature>
<feature type="binding site" evidence="2">
    <location>
        <position position="44"/>
    </location>
    <ligand>
        <name>S-adenosyl-L-methionine</name>
        <dbReference type="ChEBI" id="CHEBI:59789"/>
    </ligand>
</feature>
<feature type="binding site" evidence="2">
    <location>
        <position position="69"/>
    </location>
    <ligand>
        <name>S-adenosyl-L-methionine</name>
        <dbReference type="ChEBI" id="CHEBI:59789"/>
    </ligand>
</feature>
<feature type="binding site" evidence="2">
    <location>
        <position position="96"/>
    </location>
    <ligand>
        <name>S-adenosyl-L-methionine</name>
        <dbReference type="ChEBI" id="CHEBI:59789"/>
    </ligand>
</feature>
<feature type="binding site" evidence="2">
    <location>
        <position position="118"/>
    </location>
    <ligand>
        <name>S-adenosyl-L-methionine</name>
        <dbReference type="ChEBI" id="CHEBI:59789"/>
    </ligand>
</feature>
<feature type="binding site" evidence="2">
    <location>
        <position position="122"/>
    </location>
    <ligand>
        <name>substrate</name>
    </ligand>
</feature>
<feature type="binding site" evidence="2">
    <location>
        <position position="154"/>
    </location>
    <ligand>
        <name>substrate</name>
    </ligand>
</feature>
<feature type="binding site" evidence="2">
    <location>
        <begin position="191"/>
        <end position="194"/>
    </location>
    <ligand>
        <name>substrate</name>
    </ligand>
</feature>
<comment type="function">
    <text evidence="2">Catalyzes the formation of N(7)-methylguanine at position 46 (m7G46) in tRNA.</text>
</comment>
<comment type="catalytic activity">
    <reaction evidence="2">
        <text>guanosine(46) in tRNA + S-adenosyl-L-methionine = N(7)-methylguanosine(46) in tRNA + S-adenosyl-L-homocysteine</text>
        <dbReference type="Rhea" id="RHEA:42708"/>
        <dbReference type="Rhea" id="RHEA-COMP:10188"/>
        <dbReference type="Rhea" id="RHEA-COMP:10189"/>
        <dbReference type="ChEBI" id="CHEBI:57856"/>
        <dbReference type="ChEBI" id="CHEBI:59789"/>
        <dbReference type="ChEBI" id="CHEBI:74269"/>
        <dbReference type="ChEBI" id="CHEBI:74480"/>
        <dbReference type="EC" id="2.1.1.33"/>
    </reaction>
</comment>
<comment type="pathway">
    <text evidence="2">tRNA modification; N(7)-methylguanine-tRNA biosynthesis.</text>
</comment>
<comment type="similarity">
    <text evidence="2">Belongs to the class I-like SAM-binding methyltransferase superfamily. TrmB family.</text>
</comment>
<accession>P67502</accession>
<accession>Q8E1H8</accession>
<accession>Q8E6Z5</accession>
<organism>
    <name type="scientific">Streptococcus agalactiae serotype III (strain NEM316)</name>
    <dbReference type="NCBI Taxonomy" id="211110"/>
    <lineage>
        <taxon>Bacteria</taxon>
        <taxon>Bacillati</taxon>
        <taxon>Bacillota</taxon>
        <taxon>Bacilli</taxon>
        <taxon>Lactobacillales</taxon>
        <taxon>Streptococcaceae</taxon>
        <taxon>Streptococcus</taxon>
    </lineage>
</organism>
<name>TRMB_STRA3</name>
<reference key="1">
    <citation type="journal article" date="2002" name="Mol. Microbiol.">
        <title>Genome sequence of Streptococcus agalactiae, a pathogen causing invasive neonatal disease.</title>
        <authorList>
            <person name="Glaser P."/>
            <person name="Rusniok C."/>
            <person name="Buchrieser C."/>
            <person name="Chevalier F."/>
            <person name="Frangeul L."/>
            <person name="Msadek T."/>
            <person name="Zouine M."/>
            <person name="Couve E."/>
            <person name="Lalioui L."/>
            <person name="Poyart C."/>
            <person name="Trieu-Cuot P."/>
            <person name="Kunst F."/>
        </authorList>
    </citation>
    <scope>NUCLEOTIDE SEQUENCE [LARGE SCALE GENOMIC DNA]</scope>
    <source>
        <strain>NEM316</strain>
    </source>
</reference>
<keyword id="KW-0489">Methyltransferase</keyword>
<keyword id="KW-0949">S-adenosyl-L-methionine</keyword>
<keyword id="KW-0808">Transferase</keyword>
<keyword id="KW-0819">tRNA processing</keyword>
<evidence type="ECO:0000250" key="1"/>
<evidence type="ECO:0000255" key="2">
    <source>
        <dbReference type="HAMAP-Rule" id="MF_01057"/>
    </source>
</evidence>
<dbReference type="EC" id="2.1.1.33" evidence="2"/>
<dbReference type="EMBL" id="AL766845">
    <property type="protein sequence ID" value="CAD46056.1"/>
    <property type="molecule type" value="Genomic_DNA"/>
</dbReference>
<dbReference type="RefSeq" id="WP_001266024.1">
    <property type="nucleotide sequence ID" value="NC_004368.1"/>
</dbReference>
<dbReference type="SMR" id="P67502"/>
<dbReference type="GeneID" id="66885350"/>
<dbReference type="KEGG" id="san:gbs0412"/>
<dbReference type="eggNOG" id="COG0220">
    <property type="taxonomic scope" value="Bacteria"/>
</dbReference>
<dbReference type="HOGENOM" id="CLU_050910_2_1_9"/>
<dbReference type="UniPathway" id="UPA00989"/>
<dbReference type="Proteomes" id="UP000000823">
    <property type="component" value="Chromosome"/>
</dbReference>
<dbReference type="GO" id="GO:0043527">
    <property type="term" value="C:tRNA methyltransferase complex"/>
    <property type="evidence" value="ECO:0007669"/>
    <property type="project" value="TreeGrafter"/>
</dbReference>
<dbReference type="GO" id="GO:0008176">
    <property type="term" value="F:tRNA (guanine(46)-N7)-methyltransferase activity"/>
    <property type="evidence" value="ECO:0007669"/>
    <property type="project" value="UniProtKB-UniRule"/>
</dbReference>
<dbReference type="CDD" id="cd02440">
    <property type="entry name" value="AdoMet_MTases"/>
    <property type="match status" value="1"/>
</dbReference>
<dbReference type="FunFam" id="3.40.50.150:FF:000035">
    <property type="entry name" value="tRNA (guanine-N(7)-)-methyltransferase"/>
    <property type="match status" value="1"/>
</dbReference>
<dbReference type="Gene3D" id="3.40.50.150">
    <property type="entry name" value="Vaccinia Virus protein VP39"/>
    <property type="match status" value="1"/>
</dbReference>
<dbReference type="HAMAP" id="MF_01057">
    <property type="entry name" value="tRNA_methyltr_TrmB"/>
    <property type="match status" value="1"/>
</dbReference>
<dbReference type="InterPro" id="IPR029063">
    <property type="entry name" value="SAM-dependent_MTases_sf"/>
</dbReference>
<dbReference type="InterPro" id="IPR003358">
    <property type="entry name" value="tRNA_(Gua-N-7)_MeTrfase_Trmb"/>
</dbReference>
<dbReference type="InterPro" id="IPR055361">
    <property type="entry name" value="tRNA_methyltr_TrmB_bact"/>
</dbReference>
<dbReference type="NCBIfam" id="NF001080">
    <property type="entry name" value="PRK00121.2-2"/>
    <property type="match status" value="1"/>
</dbReference>
<dbReference type="NCBIfam" id="TIGR00091">
    <property type="entry name" value="tRNA (guanosine(46)-N7)-methyltransferase TrmB"/>
    <property type="match status" value="1"/>
</dbReference>
<dbReference type="PANTHER" id="PTHR23417">
    <property type="entry name" value="3-DEOXY-D-MANNO-OCTULOSONIC-ACID TRANSFERASE/TRNA GUANINE-N 7 - -METHYLTRANSFERASE"/>
    <property type="match status" value="1"/>
</dbReference>
<dbReference type="PANTHER" id="PTHR23417:SF14">
    <property type="entry name" value="PENTACOTRIPEPTIDE-REPEAT REGION OF PRORP DOMAIN-CONTAINING PROTEIN"/>
    <property type="match status" value="1"/>
</dbReference>
<dbReference type="Pfam" id="PF02390">
    <property type="entry name" value="Methyltransf_4"/>
    <property type="match status" value="1"/>
</dbReference>
<dbReference type="SUPFAM" id="SSF53335">
    <property type="entry name" value="S-adenosyl-L-methionine-dependent methyltransferases"/>
    <property type="match status" value="1"/>
</dbReference>
<dbReference type="PROSITE" id="PS51625">
    <property type="entry name" value="SAM_MT_TRMB"/>
    <property type="match status" value="1"/>
</dbReference>
<protein>
    <recommendedName>
        <fullName evidence="2">tRNA (guanine-N(7)-)-methyltransferase</fullName>
        <ecNumber evidence="2">2.1.1.33</ecNumber>
    </recommendedName>
    <alternativeName>
        <fullName evidence="2">tRNA (guanine(46)-N(7))-methyltransferase</fullName>
    </alternativeName>
    <alternativeName>
        <fullName evidence="2">tRNA(m7G46)-methyltransferase</fullName>
    </alternativeName>
</protein>